<evidence type="ECO:0000255" key="1">
    <source>
        <dbReference type="HAMAP-Rule" id="MF_01265"/>
    </source>
</evidence>
<organism>
    <name type="scientific">Brucella anthropi (strain ATCC 49188 / DSM 6882 / CCUG 24695 / JCM 21032 / LMG 3331 / NBRC 15819 / NCTC 12168 / Alc 37)</name>
    <name type="common">Ochrobactrum anthropi</name>
    <dbReference type="NCBI Taxonomy" id="439375"/>
    <lineage>
        <taxon>Bacteria</taxon>
        <taxon>Pseudomonadati</taxon>
        <taxon>Pseudomonadota</taxon>
        <taxon>Alphaproteobacteria</taxon>
        <taxon>Hyphomicrobiales</taxon>
        <taxon>Brucellaceae</taxon>
        <taxon>Brucella/Ochrobactrum group</taxon>
        <taxon>Brucella</taxon>
    </lineage>
</organism>
<accession>A6X792</accession>
<keyword id="KW-0520">NAD</keyword>
<keyword id="KW-0521">NADP</keyword>
<keyword id="KW-0560">Oxidoreductase</keyword>
<keyword id="KW-0662">Pyridine nucleotide biosynthesis</keyword>
<keyword id="KW-1185">Reference proteome</keyword>
<gene>
    <name evidence="1" type="primary">nadX</name>
    <name type="ordered locus">Oant_4396</name>
</gene>
<protein>
    <recommendedName>
        <fullName evidence="1">L-aspartate dehydrogenase</fullName>
        <ecNumber evidence="1">1.4.1.21</ecNumber>
    </recommendedName>
</protein>
<sequence length="268" mass="27854">MSVSETIVLVGWGAIGKRVADLLAERKSSVRIGAVAVRDRSASRDRLPAGAVLIENPAELAASGASLVVEAAGRPSVLPWGEAALSTGMDFAVSSTSAFVDDALFQRLKDAAAASGAKLIIPPGALGGIDALSAASRLSIESVEHRIIKPAKAWAGTQAAQLVPLDEISEATVFFTDTARKAADAFPQNANVAVITSLAGIGLDRTRVTLVADPAARLNTHEIIAEGDFGRMHLRFENGPLATNPKSSEMTALNLVRAIENRVATTVI</sequence>
<name>ASPD_BRUA4</name>
<proteinExistence type="inferred from homology"/>
<comment type="function">
    <text evidence="1">Specifically catalyzes the NAD or NADP-dependent dehydrogenation of L-aspartate to iminoaspartate.</text>
</comment>
<comment type="catalytic activity">
    <reaction evidence="1">
        <text>L-aspartate + NADP(+) + H2O = oxaloacetate + NH4(+) + NADPH + H(+)</text>
        <dbReference type="Rhea" id="RHEA:11784"/>
        <dbReference type="ChEBI" id="CHEBI:15377"/>
        <dbReference type="ChEBI" id="CHEBI:15378"/>
        <dbReference type="ChEBI" id="CHEBI:16452"/>
        <dbReference type="ChEBI" id="CHEBI:28938"/>
        <dbReference type="ChEBI" id="CHEBI:29991"/>
        <dbReference type="ChEBI" id="CHEBI:57783"/>
        <dbReference type="ChEBI" id="CHEBI:58349"/>
        <dbReference type="EC" id="1.4.1.21"/>
    </reaction>
</comment>
<comment type="catalytic activity">
    <reaction evidence="1">
        <text>L-aspartate + NAD(+) + H2O = oxaloacetate + NH4(+) + NADH + H(+)</text>
        <dbReference type="Rhea" id="RHEA:11788"/>
        <dbReference type="ChEBI" id="CHEBI:15377"/>
        <dbReference type="ChEBI" id="CHEBI:15378"/>
        <dbReference type="ChEBI" id="CHEBI:16452"/>
        <dbReference type="ChEBI" id="CHEBI:28938"/>
        <dbReference type="ChEBI" id="CHEBI:29991"/>
        <dbReference type="ChEBI" id="CHEBI:57540"/>
        <dbReference type="ChEBI" id="CHEBI:57945"/>
        <dbReference type="EC" id="1.4.1.21"/>
    </reaction>
</comment>
<comment type="pathway">
    <text evidence="1">Cofactor biosynthesis; NAD(+) biosynthesis; iminoaspartate from L-aspartate (dehydrogenase route): step 1/1.</text>
</comment>
<comment type="miscellaneous">
    <text evidence="1">The iminoaspartate product is unstable in aqueous solution and can decompose to oxaloacetate and ammonia.</text>
</comment>
<comment type="similarity">
    <text evidence="1">Belongs to the L-aspartate dehydrogenase family.</text>
</comment>
<dbReference type="EC" id="1.4.1.21" evidence="1"/>
<dbReference type="EMBL" id="CP000759">
    <property type="protein sequence ID" value="ABS17096.1"/>
    <property type="molecule type" value="Genomic_DNA"/>
</dbReference>
<dbReference type="RefSeq" id="WP_012093674.1">
    <property type="nucleotide sequence ID" value="NC_009668.1"/>
</dbReference>
<dbReference type="SMR" id="A6X792"/>
<dbReference type="STRING" id="439375.Oant_4396"/>
<dbReference type="KEGG" id="oan:Oant_4396"/>
<dbReference type="PATRIC" id="fig|439375.7.peg.4572"/>
<dbReference type="eggNOG" id="COG1712">
    <property type="taxonomic scope" value="Bacteria"/>
</dbReference>
<dbReference type="HOGENOM" id="CLU_089550_0_0_5"/>
<dbReference type="UniPathway" id="UPA00253">
    <property type="reaction ID" value="UER00456"/>
</dbReference>
<dbReference type="Proteomes" id="UP000002301">
    <property type="component" value="Chromosome 2"/>
</dbReference>
<dbReference type="GO" id="GO:0033735">
    <property type="term" value="F:aspartate dehydrogenase activity"/>
    <property type="evidence" value="ECO:0007669"/>
    <property type="project" value="UniProtKB-EC"/>
</dbReference>
<dbReference type="GO" id="GO:0051287">
    <property type="term" value="F:NAD binding"/>
    <property type="evidence" value="ECO:0007669"/>
    <property type="project" value="UniProtKB-UniRule"/>
</dbReference>
<dbReference type="GO" id="GO:0050661">
    <property type="term" value="F:NADP binding"/>
    <property type="evidence" value="ECO:0007669"/>
    <property type="project" value="UniProtKB-UniRule"/>
</dbReference>
<dbReference type="GO" id="GO:0016639">
    <property type="term" value="F:oxidoreductase activity, acting on the CH-NH2 group of donors, NAD or NADP as acceptor"/>
    <property type="evidence" value="ECO:0007669"/>
    <property type="project" value="UniProtKB-UniRule"/>
</dbReference>
<dbReference type="GO" id="GO:0009435">
    <property type="term" value="P:NAD biosynthetic process"/>
    <property type="evidence" value="ECO:0007669"/>
    <property type="project" value="UniProtKB-UniRule"/>
</dbReference>
<dbReference type="Gene3D" id="3.30.360.10">
    <property type="entry name" value="Dihydrodipicolinate Reductase, domain 2"/>
    <property type="match status" value="1"/>
</dbReference>
<dbReference type="Gene3D" id="3.40.50.720">
    <property type="entry name" value="NAD(P)-binding Rossmann-like Domain"/>
    <property type="match status" value="1"/>
</dbReference>
<dbReference type="HAMAP" id="MF_01265">
    <property type="entry name" value="NadX"/>
    <property type="match status" value="1"/>
</dbReference>
<dbReference type="InterPro" id="IPR005106">
    <property type="entry name" value="Asp/hSer_DH_NAD-bd"/>
</dbReference>
<dbReference type="InterPro" id="IPR002811">
    <property type="entry name" value="Asp_DH"/>
</dbReference>
<dbReference type="InterPro" id="IPR020626">
    <property type="entry name" value="Asp_DH_prok"/>
</dbReference>
<dbReference type="InterPro" id="IPR011182">
    <property type="entry name" value="L-Asp_DH"/>
</dbReference>
<dbReference type="InterPro" id="IPR036291">
    <property type="entry name" value="NAD(P)-bd_dom_sf"/>
</dbReference>
<dbReference type="NCBIfam" id="NF009828">
    <property type="entry name" value="PRK13303.1-3"/>
    <property type="match status" value="1"/>
</dbReference>
<dbReference type="PANTHER" id="PTHR31873:SF6">
    <property type="entry name" value="ASPARTATE DEHYDROGENASE DOMAIN-CONTAINING PROTEIN"/>
    <property type="match status" value="1"/>
</dbReference>
<dbReference type="PANTHER" id="PTHR31873">
    <property type="entry name" value="L-ASPARTATE DEHYDROGENASE-RELATED"/>
    <property type="match status" value="1"/>
</dbReference>
<dbReference type="Pfam" id="PF01958">
    <property type="entry name" value="Asp_DH_C"/>
    <property type="match status" value="1"/>
</dbReference>
<dbReference type="Pfam" id="PF03447">
    <property type="entry name" value="NAD_binding_3"/>
    <property type="match status" value="1"/>
</dbReference>
<dbReference type="PIRSF" id="PIRSF005227">
    <property type="entry name" value="Asp_dh_NAD_syn"/>
    <property type="match status" value="1"/>
</dbReference>
<dbReference type="SUPFAM" id="SSF55347">
    <property type="entry name" value="Glyceraldehyde-3-phosphate dehydrogenase-like, C-terminal domain"/>
    <property type="match status" value="1"/>
</dbReference>
<dbReference type="SUPFAM" id="SSF51735">
    <property type="entry name" value="NAD(P)-binding Rossmann-fold domains"/>
    <property type="match status" value="1"/>
</dbReference>
<reference key="1">
    <citation type="journal article" date="2011" name="J. Bacteriol.">
        <title>Genome of Ochrobactrum anthropi ATCC 49188 T, a versatile opportunistic pathogen and symbiont of several eukaryotic hosts.</title>
        <authorList>
            <person name="Chain P.S."/>
            <person name="Lang D.M."/>
            <person name="Comerci D.J."/>
            <person name="Malfatti S.A."/>
            <person name="Vergez L.M."/>
            <person name="Shin M."/>
            <person name="Ugalde R.A."/>
            <person name="Garcia E."/>
            <person name="Tolmasky M.E."/>
        </authorList>
    </citation>
    <scope>NUCLEOTIDE SEQUENCE [LARGE SCALE GENOMIC DNA]</scope>
    <source>
        <strain>ATCC 49188 / DSM 6882 / CCUG 24695 / JCM 21032 / LMG 3331 / NBRC 15819 / NCTC 12168 / Alc 37</strain>
    </source>
</reference>
<feature type="chain" id="PRO_1000067309" description="L-aspartate dehydrogenase">
    <location>
        <begin position="1"/>
        <end position="268"/>
    </location>
</feature>
<feature type="active site" evidence="1">
    <location>
        <position position="221"/>
    </location>
</feature>
<feature type="binding site" evidence="1">
    <location>
        <position position="125"/>
    </location>
    <ligand>
        <name>NAD(+)</name>
        <dbReference type="ChEBI" id="CHEBI:57540"/>
    </ligand>
</feature>
<feature type="binding site" evidence="1">
    <location>
        <position position="191"/>
    </location>
    <ligand>
        <name>NAD(+)</name>
        <dbReference type="ChEBI" id="CHEBI:57540"/>
    </ligand>
</feature>